<protein>
    <recommendedName>
        <fullName>Putative calpain-like cysteine protease A</fullName>
        <ecNumber>3.4.22.-</ecNumber>
    </recommendedName>
    <component>
        <recommendedName>
            <fullName>Putative processed calpain-like cysteine protease A</fullName>
        </recommendedName>
    </component>
</protein>
<evidence type="ECO:0000255" key="1">
    <source>
        <dbReference type="PROSITE-ProRule" id="PRU00041"/>
    </source>
</evidence>
<evidence type="ECO:0000256" key="2">
    <source>
        <dbReference type="SAM" id="MobiDB-lite"/>
    </source>
</evidence>
<evidence type="ECO:0000269" key="3">
    <source>
    </source>
</evidence>
<evidence type="ECO:0000305" key="4"/>
<accession>Q8MUF9</accession>
<accession>Q55BR8</accession>
<sequence>MLTTESPTTTTTTTTTTTSSPSSDIRDKFIFGNLEVKVKEVKGCQLHFLNVKCELALKKTEIKTKPLANHTFFDVFSFRVSAATSELEIEAWKKNFLFKDKMTGSLTIPINDLLHANGEAKWYPLSNKKPRSSRVKKENITNSNNKDNNTASPSSPDEAQEKGDEDQHHSADESPAEETSPTTGRPRSVSMPAKKVKAAPEICLEIKFVLNEPPKEVLKGIVLDGVWNSENNFGSLINNPHWIKCTQYLLSIKDEITPITLKLRQPEGTDQRCSFFVINYDPFYNGSKKVILDTTNDIKKVSSFNSPIPATSVDCKIDLEPGQYCIIPYAESFAFSGTYKFNLDSEKLDNCEFYALPKSQEQAWNEITVDGLWTTATNGGGDINILGWTKNPQYSFTLTKKSRACVLLSQDDNDKSVGFYVIKQLDAGKRAIEFREQVGKTESFKFSCSTGCTLTLDEGTYIVIPSTYDHGIEGAFHLTLFTDDKNATFQPLTNAFQEVEQVKGTWVGKSAGGSPNQPTFFNNPQFHLKVPASDKDEVIAVQLIQDSTIADEGIGFIVLSRDSHSEPLTAQDFQNEMVFTKTSNWEKRNDIVCRLHVKPESPREFTIIPSTFDPSVNRSFKLQVYSDVSISLDEIEQKDESSDSEQNDD</sequence>
<name>CPLA_DICDI</name>
<feature type="propeptide" id="PRO_0000327882" evidence="3">
    <location>
        <begin position="1"/>
        <end position="3"/>
    </location>
</feature>
<feature type="chain" id="PRO_0000327883" description="Putative calpain-like cysteine protease A">
    <location>
        <begin position="4"/>
        <end position="649"/>
    </location>
</feature>
<feature type="chain" id="PRO_0000327884" description="Putative processed calpain-like cysteine protease A">
    <location>
        <begin position="193"/>
        <end position="649"/>
    </location>
</feature>
<feature type="domain" description="C2" evidence="1">
    <location>
        <begin position="15"/>
        <end position="123"/>
    </location>
</feature>
<feature type="region of interest" description="Disordered" evidence="2">
    <location>
        <begin position="1"/>
        <end position="22"/>
    </location>
</feature>
<feature type="region of interest" description="Disordered" evidence="2">
    <location>
        <begin position="124"/>
        <end position="193"/>
    </location>
</feature>
<feature type="region of interest" description="Domain III 1">
    <location>
        <begin position="458"/>
        <end position="489"/>
    </location>
</feature>
<feature type="region of interest" description="Domain III 2">
    <location>
        <begin position="498"/>
        <end position="633"/>
    </location>
</feature>
<feature type="compositionally biased region" description="Low complexity" evidence="2">
    <location>
        <begin position="140"/>
        <end position="149"/>
    </location>
</feature>
<feature type="compositionally biased region" description="Basic and acidic residues" evidence="2">
    <location>
        <begin position="159"/>
        <end position="172"/>
    </location>
</feature>
<feature type="site" description="Cleavage; by autolysis">
    <location>
        <begin position="192"/>
        <end position="193"/>
    </location>
</feature>
<reference key="1">
    <citation type="journal article" date="2003" name="Biochemistry">
        <title>Purification and properties of the Dictyostelium calpain-like protein, Cpl.</title>
        <authorList>
            <person name="Huang X."/>
            <person name="Czerwinski E."/>
            <person name="Mellgren R.L."/>
        </authorList>
    </citation>
    <scope>NUCLEOTIDE SEQUENCE [MRNA]</scope>
    <scope>PROTEIN SEQUENCE OF 4-15 AND 193-199</scope>
    <scope>FUNCTION</scope>
    <scope>SUBCELLULAR LOCATION</scope>
    <scope>SUBUNIT</scope>
    <scope>AUTOCATALYTIC CLEAVAGE</scope>
    <source>
        <strain>AX3</strain>
    </source>
</reference>
<reference key="2">
    <citation type="journal article" date="2005" name="Nature">
        <title>The genome of the social amoeba Dictyostelium discoideum.</title>
        <authorList>
            <person name="Eichinger L."/>
            <person name="Pachebat J.A."/>
            <person name="Gloeckner G."/>
            <person name="Rajandream M.A."/>
            <person name="Sucgang R."/>
            <person name="Berriman M."/>
            <person name="Song J."/>
            <person name="Olsen R."/>
            <person name="Szafranski K."/>
            <person name="Xu Q."/>
            <person name="Tunggal B."/>
            <person name="Kummerfeld S."/>
            <person name="Madera M."/>
            <person name="Konfortov B.A."/>
            <person name="Rivero F."/>
            <person name="Bankier A.T."/>
            <person name="Lehmann R."/>
            <person name="Hamlin N."/>
            <person name="Davies R."/>
            <person name="Gaudet P."/>
            <person name="Fey P."/>
            <person name="Pilcher K."/>
            <person name="Chen G."/>
            <person name="Saunders D."/>
            <person name="Sodergren E.J."/>
            <person name="Davis P."/>
            <person name="Kerhornou A."/>
            <person name="Nie X."/>
            <person name="Hall N."/>
            <person name="Anjard C."/>
            <person name="Hemphill L."/>
            <person name="Bason N."/>
            <person name="Farbrother P."/>
            <person name="Desany B."/>
            <person name="Just E."/>
            <person name="Morio T."/>
            <person name="Rost R."/>
            <person name="Churcher C.M."/>
            <person name="Cooper J."/>
            <person name="Haydock S."/>
            <person name="van Driessche N."/>
            <person name="Cronin A."/>
            <person name="Goodhead I."/>
            <person name="Muzny D.M."/>
            <person name="Mourier T."/>
            <person name="Pain A."/>
            <person name="Lu M."/>
            <person name="Harper D."/>
            <person name="Lindsay R."/>
            <person name="Hauser H."/>
            <person name="James K.D."/>
            <person name="Quiles M."/>
            <person name="Madan Babu M."/>
            <person name="Saito T."/>
            <person name="Buchrieser C."/>
            <person name="Wardroper A."/>
            <person name="Felder M."/>
            <person name="Thangavelu M."/>
            <person name="Johnson D."/>
            <person name="Knights A."/>
            <person name="Loulseged H."/>
            <person name="Mungall K.L."/>
            <person name="Oliver K."/>
            <person name="Price C."/>
            <person name="Quail M.A."/>
            <person name="Urushihara H."/>
            <person name="Hernandez J."/>
            <person name="Rabbinowitsch E."/>
            <person name="Steffen D."/>
            <person name="Sanders M."/>
            <person name="Ma J."/>
            <person name="Kohara Y."/>
            <person name="Sharp S."/>
            <person name="Simmonds M.N."/>
            <person name="Spiegler S."/>
            <person name="Tivey A."/>
            <person name="Sugano S."/>
            <person name="White B."/>
            <person name="Walker D."/>
            <person name="Woodward J.R."/>
            <person name="Winckler T."/>
            <person name="Tanaka Y."/>
            <person name="Shaulsky G."/>
            <person name="Schleicher M."/>
            <person name="Weinstock G.M."/>
            <person name="Rosenthal A."/>
            <person name="Cox E.C."/>
            <person name="Chisholm R.L."/>
            <person name="Gibbs R.A."/>
            <person name="Loomis W.F."/>
            <person name="Platzer M."/>
            <person name="Kay R.R."/>
            <person name="Williams J.G."/>
            <person name="Dear P.H."/>
            <person name="Noegel A.A."/>
            <person name="Barrell B.G."/>
            <person name="Kuspa A."/>
        </authorList>
    </citation>
    <scope>NUCLEOTIDE SEQUENCE [LARGE SCALE GENOMIC DNA]</scope>
    <source>
        <strain>AX4</strain>
    </source>
</reference>
<dbReference type="EC" id="3.4.22.-"/>
<dbReference type="EMBL" id="AF525418">
    <property type="protein sequence ID" value="AAM91927.1"/>
    <property type="molecule type" value="mRNA"/>
</dbReference>
<dbReference type="EMBL" id="AAFI02000005">
    <property type="protein sequence ID" value="EAL71950.1"/>
    <property type="molecule type" value="Genomic_DNA"/>
</dbReference>
<dbReference type="RefSeq" id="XP_646763.1">
    <property type="nucleotide sequence ID" value="XM_641671.1"/>
</dbReference>
<dbReference type="SMR" id="Q8MUF9"/>
<dbReference type="FunCoup" id="Q8MUF9">
    <property type="interactions" value="130"/>
</dbReference>
<dbReference type="STRING" id="44689.Q8MUF9"/>
<dbReference type="PaxDb" id="44689-DDB0191171"/>
<dbReference type="EnsemblProtists" id="EAL71950">
    <property type="protein sequence ID" value="EAL71950"/>
    <property type="gene ID" value="DDB_G0269200"/>
</dbReference>
<dbReference type="GeneID" id="8617736"/>
<dbReference type="KEGG" id="ddi:DDB_G0269200"/>
<dbReference type="dictyBase" id="DDB_G0269200">
    <property type="gene designation" value="cplA"/>
</dbReference>
<dbReference type="VEuPathDB" id="AmoebaDB:DDB_G0269200"/>
<dbReference type="eggNOG" id="ENOG502SS2N">
    <property type="taxonomic scope" value="Eukaryota"/>
</dbReference>
<dbReference type="HOGENOM" id="CLU_422394_0_0_1"/>
<dbReference type="InParanoid" id="Q8MUF9"/>
<dbReference type="OMA" id="INNPHWI"/>
<dbReference type="Reactome" id="R-DDI-6798695">
    <property type="pathway name" value="Neutrophil degranulation"/>
</dbReference>
<dbReference type="PRO" id="PR:Q8MUF9"/>
<dbReference type="Proteomes" id="UP000002195">
    <property type="component" value="Chromosome 1"/>
</dbReference>
<dbReference type="GO" id="GO:0005829">
    <property type="term" value="C:cytosol"/>
    <property type="evidence" value="ECO:0007669"/>
    <property type="project" value="UniProtKB-SubCell"/>
</dbReference>
<dbReference type="GO" id="GO:0004198">
    <property type="term" value="F:calcium-dependent cysteine-type endopeptidase activity"/>
    <property type="evidence" value="ECO:0000314"/>
    <property type="project" value="dictyBase"/>
</dbReference>
<dbReference type="GO" id="GO:0006508">
    <property type="term" value="P:proteolysis"/>
    <property type="evidence" value="ECO:0007669"/>
    <property type="project" value="UniProtKB-KW"/>
</dbReference>
<dbReference type="Gene3D" id="2.60.120.380">
    <property type="match status" value="3"/>
</dbReference>
<dbReference type="Gene3D" id="2.60.40.150">
    <property type="entry name" value="C2 domain"/>
    <property type="match status" value="1"/>
</dbReference>
<dbReference type="InterPro" id="IPR000008">
    <property type="entry name" value="C2_dom"/>
</dbReference>
<dbReference type="InterPro" id="IPR035892">
    <property type="entry name" value="C2_domain_sf"/>
</dbReference>
<dbReference type="InterPro" id="IPR022684">
    <property type="entry name" value="Calpain_cysteine_protease"/>
</dbReference>
<dbReference type="InterPro" id="IPR022682">
    <property type="entry name" value="Calpain_domain_III"/>
</dbReference>
<dbReference type="InterPro" id="IPR022683">
    <property type="entry name" value="Calpain_III"/>
</dbReference>
<dbReference type="InterPro" id="IPR036213">
    <property type="entry name" value="Calpain_III_sf"/>
</dbReference>
<dbReference type="PANTHER" id="PTHR10183">
    <property type="entry name" value="CALPAIN"/>
    <property type="match status" value="1"/>
</dbReference>
<dbReference type="PANTHER" id="PTHR10183:SF379">
    <property type="entry name" value="CALPAIN-5"/>
    <property type="match status" value="1"/>
</dbReference>
<dbReference type="Pfam" id="PF00168">
    <property type="entry name" value="C2"/>
    <property type="match status" value="1"/>
</dbReference>
<dbReference type="Pfam" id="PF01067">
    <property type="entry name" value="Calpain_III"/>
    <property type="match status" value="2"/>
</dbReference>
<dbReference type="PRINTS" id="PR00704">
    <property type="entry name" value="CALPAIN"/>
</dbReference>
<dbReference type="SMART" id="SM00720">
    <property type="entry name" value="calpain_III"/>
    <property type="match status" value="2"/>
</dbReference>
<dbReference type="SUPFAM" id="SSF49562">
    <property type="entry name" value="C2 domain (Calcium/lipid-binding domain, CaLB)"/>
    <property type="match status" value="1"/>
</dbReference>
<dbReference type="SUPFAM" id="SSF49758">
    <property type="entry name" value="Calpain large subunit, middle domain (domain III)"/>
    <property type="match status" value="3"/>
</dbReference>
<dbReference type="PROSITE" id="PS50004">
    <property type="entry name" value="C2"/>
    <property type="match status" value="1"/>
</dbReference>
<comment type="function">
    <text evidence="3">Has a weak caseinolytic activity.</text>
</comment>
<comment type="subunit">
    <text evidence="3">Monomer.</text>
</comment>
<comment type="subcellular location">
    <subcellularLocation>
        <location evidence="3">Cytoplasm</location>
        <location evidence="3">Cytosol</location>
    </subcellularLocation>
</comment>
<comment type="PTM">
    <text>Undergoes autolytic cleavage between Pro-192 and Ala-193.</text>
</comment>
<comment type="similarity">
    <text evidence="4">Belongs to the peptidase C2 family.</text>
</comment>
<keyword id="KW-0068">Autocatalytic cleavage</keyword>
<keyword id="KW-0963">Cytoplasm</keyword>
<keyword id="KW-0903">Direct protein sequencing</keyword>
<keyword id="KW-0378">Hydrolase</keyword>
<keyword id="KW-0645">Protease</keyword>
<keyword id="KW-1185">Reference proteome</keyword>
<keyword id="KW-0677">Repeat</keyword>
<keyword id="KW-0788">Thiol protease</keyword>
<gene>
    <name type="primary">cplA</name>
    <name type="synonym">cpl</name>
    <name type="ORF">DDB_G0269200</name>
</gene>
<proteinExistence type="evidence at protein level"/>
<organism>
    <name type="scientific">Dictyostelium discoideum</name>
    <name type="common">Social amoeba</name>
    <dbReference type="NCBI Taxonomy" id="44689"/>
    <lineage>
        <taxon>Eukaryota</taxon>
        <taxon>Amoebozoa</taxon>
        <taxon>Evosea</taxon>
        <taxon>Eumycetozoa</taxon>
        <taxon>Dictyostelia</taxon>
        <taxon>Dictyosteliales</taxon>
        <taxon>Dictyosteliaceae</taxon>
        <taxon>Dictyostelium</taxon>
    </lineage>
</organism>